<sequence length="874" mass="96818">MAVVDDLAPGMDSSPPSEDYGRQPPQDLAAEQSVLGGMLLSKDAIADVLERLRPGDFYRPAHQNVYDAILDLYGRGEPADAVTVAAELDRRGLLRRIGGAPYLHTLISTVPTAANAGYYASIVAEKALLRRLVEAGTRVVQYGYAGAEGADVAEVVDRAQAEIYDVADRRLSEDFVALEDLLQPTMDEIDAIASSGGLARGVATGFTELDEVTNGLHPGQMVIVAARPGVGKSTLGLDFMRSCSIRHRMASVIFSLEMSKSEIVMRLLSAEAKIKLSDMRSGRMSDDDWTRLARRMSEISEAPLFIDDSPNLTMMEIRAKARRLRQKANLKLIVVDYLQLMTSGKKYESRQVEVSEFSRHLKLLAKELEVPVVAISQLNRGPEQRTDKKPMLADLRESGCLTASTRILRADTGAEVAFGELMRSGERPMVWSLDERLRMVARPMINVFPSGRKEVFRLRLASGREVEATGSHPFMKFEGWTPLAQLKVGDRIAAPRRVPEPIDTQRMPESELISLARMIGDGSCLKNQPIRYEPVDEANLAAVTVSAAHSDGAAIRDDYLAARVPSLRPARQRLPRGRCTPIAAWLAGLGLFTKRSHEKCVPEAVFRAPNDQVALFLRHLWSAGGSVRWDPTNGQGRVYYGSTSRRLIDDVAQLLLRVGIFSWITHAPKLGGHDSWRLHIHGAKDQVRFLRHVGVHGAEAVAAQEMLRQLKGPVRNPNLDSAPKKVWAQVRNRLSAKQMMDIQLHEPTMWKHSPSRSRPHRAEARIEDRAIHELARGDAYWDTVVEITSIGDQHVFDGTVSGTHNFVANGISLHNSLEQDADVVILLHRPDAFDRDDPRGGEADFILAKHRNGPTKTVTVAHQLHLSRFANMAR</sequence>
<comment type="function">
    <text evidence="1">The main replicative DNA helicase, it participates in initiation and elongation during chromosome replication. Travels ahead of the DNA replisome, separating dsDNA into templates for DNA synthesis. A processive ATP-dependent 5'-3' DNA helicase it has DNA-dependent ATPase activity.</text>
</comment>
<comment type="function">
    <text evidence="2">The intein is an endonuclease.</text>
</comment>
<comment type="catalytic activity">
    <reaction evidence="1">
        <text>Couples ATP hydrolysis with the unwinding of duplex DNA at the replication fork by translocating in the 5'-3' direction. This creates two antiparallel DNA single strands (ssDNA). The leading ssDNA polymer is the template for DNA polymerase III holoenzyme which synthesizes a continuous strand.</text>
        <dbReference type="EC" id="5.6.2.3"/>
    </reaction>
</comment>
<comment type="catalytic activity">
    <reaction evidence="1">
        <text>ATP + H2O = ADP + phosphate + H(+)</text>
        <dbReference type="Rhea" id="RHEA:13065"/>
        <dbReference type="ChEBI" id="CHEBI:15377"/>
        <dbReference type="ChEBI" id="CHEBI:15378"/>
        <dbReference type="ChEBI" id="CHEBI:30616"/>
        <dbReference type="ChEBI" id="CHEBI:43474"/>
        <dbReference type="ChEBI" id="CHEBI:456216"/>
        <dbReference type="EC" id="5.6.2.3"/>
    </reaction>
</comment>
<comment type="subunit">
    <text evidence="1">Homohexamer.</text>
</comment>
<comment type="PTM">
    <text evidence="2">This protein undergoes a protein self splicing that involves a post-translational excision of the intervening region (intein) followed by peptide ligation.</text>
</comment>
<comment type="similarity">
    <text evidence="6">Belongs to the helicase family. DnaB subfamily.</text>
</comment>
<name>DNAB_MYCTO</name>
<protein>
    <recommendedName>
        <fullName>Replicative DNA helicase DnaB</fullName>
        <ecNumber evidence="1">5.6.2.3</ecNumber>
    </recommendedName>
    <alternativeName>
        <fullName evidence="6">DNA 5'-3' helicase DnaB</fullName>
    </alternativeName>
    <component>
        <recommendedName>
            <fullName>Endonuclease PI-MtuHIP</fullName>
            <ecNumber evidence="2">3.1.-.-</ecNumber>
        </recommendedName>
        <alternativeName>
            <fullName>Mtu DnaB intein</fullName>
        </alternativeName>
    </component>
</protein>
<feature type="chain" id="PRO_0000427257" description="Replicative DNA helicase DnaB, 1st part">
    <location>
        <begin position="1"/>
        <end position="399"/>
    </location>
</feature>
<feature type="chain" id="PRO_0000427258" description="Endonuclease PI-MtuHIP">
    <location>
        <begin position="400"/>
        <end position="815"/>
    </location>
</feature>
<feature type="chain" id="PRO_0000427259" description="Replicative DNA helicase DnaB, 2nd part">
    <location>
        <begin position="816"/>
        <end position="874"/>
    </location>
</feature>
<feature type="domain" description="SF4 helicase; first part" evidence="4">
    <location>
        <begin position="195"/>
        <end position="462"/>
    </location>
</feature>
<feature type="domain" description="DOD-type homing endonuclease" evidence="3">
    <location>
        <begin position="582"/>
        <end position="660"/>
    </location>
</feature>
<feature type="domain" description="SF4 helicase; second part" evidence="4">
    <location>
        <begin position="612"/>
        <end position="874"/>
    </location>
</feature>
<feature type="region of interest" description="Disordered" evidence="5">
    <location>
        <begin position="1"/>
        <end position="25"/>
    </location>
</feature>
<feature type="binding site" evidence="4">
    <location>
        <begin position="226"/>
        <end position="233"/>
    </location>
    <ligand>
        <name>ATP</name>
        <dbReference type="ChEBI" id="CHEBI:30616"/>
    </ligand>
</feature>
<accession>P9WMR2</accession>
<accession>L0T2G0</accession>
<accession>P71715</accession>
<gene>
    <name type="primary">dnaB</name>
    <name type="ordered locus">MT0064</name>
</gene>
<reference key="1">
    <citation type="journal article" date="2002" name="J. Bacteriol.">
        <title>Whole-genome comparison of Mycobacterium tuberculosis clinical and laboratory strains.</title>
        <authorList>
            <person name="Fleischmann R.D."/>
            <person name="Alland D."/>
            <person name="Eisen J.A."/>
            <person name="Carpenter L."/>
            <person name="White O."/>
            <person name="Peterson J.D."/>
            <person name="DeBoy R.T."/>
            <person name="Dodson R.J."/>
            <person name="Gwinn M.L."/>
            <person name="Haft D.H."/>
            <person name="Hickey E.K."/>
            <person name="Kolonay J.F."/>
            <person name="Nelson W.C."/>
            <person name="Umayam L.A."/>
            <person name="Ermolaeva M.D."/>
            <person name="Salzberg S.L."/>
            <person name="Delcher A."/>
            <person name="Utterback T.R."/>
            <person name="Weidman J.F."/>
            <person name="Khouri H.M."/>
            <person name="Gill J."/>
            <person name="Mikula A."/>
            <person name="Bishai W."/>
            <person name="Jacobs W.R. Jr."/>
            <person name="Venter J.C."/>
            <person name="Fraser C.M."/>
        </authorList>
    </citation>
    <scope>NUCLEOTIDE SEQUENCE [LARGE SCALE GENOMIC DNA]</scope>
    <source>
        <strain>CDC 1551 / Oshkosh</strain>
    </source>
</reference>
<organism>
    <name type="scientific">Mycobacterium tuberculosis (strain CDC 1551 / Oshkosh)</name>
    <dbReference type="NCBI Taxonomy" id="83331"/>
    <lineage>
        <taxon>Bacteria</taxon>
        <taxon>Bacillati</taxon>
        <taxon>Actinomycetota</taxon>
        <taxon>Actinomycetes</taxon>
        <taxon>Mycobacteriales</taxon>
        <taxon>Mycobacteriaceae</taxon>
        <taxon>Mycobacterium</taxon>
        <taxon>Mycobacterium tuberculosis complex</taxon>
    </lineage>
</organism>
<dbReference type="EC" id="5.6.2.3" evidence="1"/>
<dbReference type="EC" id="3.1.-.-" evidence="2"/>
<dbReference type="EMBL" id="AE000516">
    <property type="protein sequence ID" value="AAK44286.1"/>
    <property type="molecule type" value="Genomic_DNA"/>
</dbReference>
<dbReference type="PIR" id="B70914">
    <property type="entry name" value="B70914"/>
</dbReference>
<dbReference type="RefSeq" id="WP_003400547.1">
    <property type="nucleotide sequence ID" value="NZ_KK341227.1"/>
</dbReference>
<dbReference type="SMR" id="P9WMR2"/>
<dbReference type="KEGG" id="mtc:MT0064"/>
<dbReference type="PATRIC" id="fig|83331.31.peg.64"/>
<dbReference type="HOGENOM" id="CLU_005373_3_0_11"/>
<dbReference type="Proteomes" id="UP000001020">
    <property type="component" value="Chromosome"/>
</dbReference>
<dbReference type="GO" id="GO:0005829">
    <property type="term" value="C:cytosol"/>
    <property type="evidence" value="ECO:0007669"/>
    <property type="project" value="TreeGrafter"/>
</dbReference>
<dbReference type="GO" id="GO:1990077">
    <property type="term" value="C:primosome complex"/>
    <property type="evidence" value="ECO:0007669"/>
    <property type="project" value="UniProtKB-KW"/>
</dbReference>
<dbReference type="GO" id="GO:0005524">
    <property type="term" value="F:ATP binding"/>
    <property type="evidence" value="ECO:0007669"/>
    <property type="project" value="UniProtKB-KW"/>
</dbReference>
<dbReference type="GO" id="GO:0016887">
    <property type="term" value="F:ATP hydrolysis activity"/>
    <property type="evidence" value="ECO:0007669"/>
    <property type="project" value="InterPro"/>
</dbReference>
<dbReference type="GO" id="GO:0003677">
    <property type="term" value="F:DNA binding"/>
    <property type="evidence" value="ECO:0007669"/>
    <property type="project" value="UniProtKB-KW"/>
</dbReference>
<dbReference type="GO" id="GO:0003678">
    <property type="term" value="F:DNA helicase activity"/>
    <property type="evidence" value="ECO:0007669"/>
    <property type="project" value="InterPro"/>
</dbReference>
<dbReference type="GO" id="GO:0004519">
    <property type="term" value="F:endonuclease activity"/>
    <property type="evidence" value="ECO:0007669"/>
    <property type="project" value="UniProtKB-KW"/>
</dbReference>
<dbReference type="GO" id="GO:0006269">
    <property type="term" value="P:DNA replication, synthesis of primer"/>
    <property type="evidence" value="ECO:0007669"/>
    <property type="project" value="UniProtKB-KW"/>
</dbReference>
<dbReference type="GO" id="GO:0016539">
    <property type="term" value="P:intein-mediated protein splicing"/>
    <property type="evidence" value="ECO:0007669"/>
    <property type="project" value="InterPro"/>
</dbReference>
<dbReference type="GO" id="GO:0006314">
    <property type="term" value="P:intron homing"/>
    <property type="evidence" value="ECO:0007669"/>
    <property type="project" value="UniProtKB-KW"/>
</dbReference>
<dbReference type="CDD" id="cd00984">
    <property type="entry name" value="DnaB_C"/>
    <property type="match status" value="1"/>
</dbReference>
<dbReference type="CDD" id="cd00081">
    <property type="entry name" value="Hint"/>
    <property type="match status" value="2"/>
</dbReference>
<dbReference type="FunFam" id="1.10.860.10:FF:000001">
    <property type="entry name" value="Replicative DNA helicase"/>
    <property type="match status" value="1"/>
</dbReference>
<dbReference type="FunFam" id="3.40.50.300:FF:001469">
    <property type="entry name" value="Replicative DNA helicase"/>
    <property type="match status" value="1"/>
</dbReference>
<dbReference type="FunFam" id="3.40.50.300:FF:002029">
    <property type="entry name" value="Replicative DNA helicase"/>
    <property type="match status" value="1"/>
</dbReference>
<dbReference type="Gene3D" id="1.10.860.10">
    <property type="entry name" value="DNAb Helicase, Chain A"/>
    <property type="match status" value="1"/>
</dbReference>
<dbReference type="Gene3D" id="2.170.16.10">
    <property type="entry name" value="Hedgehog/Intein (Hint) domain"/>
    <property type="match status" value="2"/>
</dbReference>
<dbReference type="Gene3D" id="3.10.28.10">
    <property type="entry name" value="Homing endonucleases"/>
    <property type="match status" value="1"/>
</dbReference>
<dbReference type="Gene3D" id="3.40.50.300">
    <property type="entry name" value="P-loop containing nucleotide triphosphate hydrolases"/>
    <property type="match status" value="2"/>
</dbReference>
<dbReference type="InterPro" id="IPR003593">
    <property type="entry name" value="AAA+_ATPase"/>
</dbReference>
<dbReference type="InterPro" id="IPR036185">
    <property type="entry name" value="DNA_heli_DnaB-like_N_sf"/>
</dbReference>
<dbReference type="InterPro" id="IPR007692">
    <property type="entry name" value="DNA_helicase_DnaB"/>
</dbReference>
<dbReference type="InterPro" id="IPR007694">
    <property type="entry name" value="DNA_helicase_DnaB-like_C"/>
</dbReference>
<dbReference type="InterPro" id="IPR007693">
    <property type="entry name" value="DNA_helicase_DnaB-like_N"/>
</dbReference>
<dbReference type="InterPro" id="IPR016136">
    <property type="entry name" value="DNA_helicase_N/primase_C"/>
</dbReference>
<dbReference type="InterPro" id="IPR003586">
    <property type="entry name" value="Hint_dom_C"/>
</dbReference>
<dbReference type="InterPro" id="IPR003587">
    <property type="entry name" value="Hint_dom_N"/>
</dbReference>
<dbReference type="InterPro" id="IPR036844">
    <property type="entry name" value="Hint_dom_sf"/>
</dbReference>
<dbReference type="InterPro" id="IPR027434">
    <property type="entry name" value="Homing_endonucl"/>
</dbReference>
<dbReference type="InterPro" id="IPR006142">
    <property type="entry name" value="INTEIN"/>
</dbReference>
<dbReference type="InterPro" id="IPR030934">
    <property type="entry name" value="Intein_C"/>
</dbReference>
<dbReference type="InterPro" id="IPR004042">
    <property type="entry name" value="Intein_endonuc_central"/>
</dbReference>
<dbReference type="InterPro" id="IPR006141">
    <property type="entry name" value="Intein_N"/>
</dbReference>
<dbReference type="InterPro" id="IPR004860">
    <property type="entry name" value="LAGLIDADG_dom"/>
</dbReference>
<dbReference type="InterPro" id="IPR027417">
    <property type="entry name" value="P-loop_NTPase"/>
</dbReference>
<dbReference type="NCBIfam" id="TIGR00665">
    <property type="entry name" value="DnaB"/>
    <property type="match status" value="1"/>
</dbReference>
<dbReference type="NCBIfam" id="TIGR01443">
    <property type="entry name" value="intein_Cterm"/>
    <property type="match status" value="1"/>
</dbReference>
<dbReference type="NCBIfam" id="TIGR01445">
    <property type="entry name" value="intein_Nterm"/>
    <property type="match status" value="1"/>
</dbReference>
<dbReference type="NCBIfam" id="NF005852">
    <property type="entry name" value="PRK07773.1"/>
    <property type="match status" value="1"/>
</dbReference>
<dbReference type="PANTHER" id="PTHR30153:SF2">
    <property type="entry name" value="REPLICATIVE DNA HELICASE"/>
    <property type="match status" value="1"/>
</dbReference>
<dbReference type="PANTHER" id="PTHR30153">
    <property type="entry name" value="REPLICATIVE DNA HELICASE DNAB"/>
    <property type="match status" value="1"/>
</dbReference>
<dbReference type="Pfam" id="PF00772">
    <property type="entry name" value="DnaB"/>
    <property type="match status" value="1"/>
</dbReference>
<dbReference type="Pfam" id="PF03796">
    <property type="entry name" value="DnaB_C"/>
    <property type="match status" value="2"/>
</dbReference>
<dbReference type="Pfam" id="PF14890">
    <property type="entry name" value="Intein_splicing"/>
    <property type="match status" value="1"/>
</dbReference>
<dbReference type="Pfam" id="PF14528">
    <property type="entry name" value="LAGLIDADG_3"/>
    <property type="match status" value="1"/>
</dbReference>
<dbReference type="PRINTS" id="PR00379">
    <property type="entry name" value="INTEIN"/>
</dbReference>
<dbReference type="SMART" id="SM00382">
    <property type="entry name" value="AAA"/>
    <property type="match status" value="1"/>
</dbReference>
<dbReference type="SMART" id="SM00305">
    <property type="entry name" value="HintC"/>
    <property type="match status" value="1"/>
</dbReference>
<dbReference type="SMART" id="SM00306">
    <property type="entry name" value="HintN"/>
    <property type="match status" value="1"/>
</dbReference>
<dbReference type="SUPFAM" id="SSF51294">
    <property type="entry name" value="Hedgehog/intein (Hint) domain"/>
    <property type="match status" value="1"/>
</dbReference>
<dbReference type="SUPFAM" id="SSF55608">
    <property type="entry name" value="Homing endonucleases"/>
    <property type="match status" value="1"/>
</dbReference>
<dbReference type="SUPFAM" id="SSF48024">
    <property type="entry name" value="N-terminal domain of DnaB helicase"/>
    <property type="match status" value="1"/>
</dbReference>
<dbReference type="SUPFAM" id="SSF52540">
    <property type="entry name" value="P-loop containing nucleoside triphosphate hydrolases"/>
    <property type="match status" value="1"/>
</dbReference>
<dbReference type="PROSITE" id="PS50818">
    <property type="entry name" value="INTEIN_C_TER"/>
    <property type="match status" value="1"/>
</dbReference>
<dbReference type="PROSITE" id="PS50819">
    <property type="entry name" value="INTEIN_ENDONUCLEASE"/>
    <property type="match status" value="1"/>
</dbReference>
<dbReference type="PROSITE" id="PS50817">
    <property type="entry name" value="INTEIN_N_TER"/>
    <property type="match status" value="1"/>
</dbReference>
<dbReference type="PROSITE" id="PS51199">
    <property type="entry name" value="SF4_HELICASE"/>
    <property type="match status" value="2"/>
</dbReference>
<evidence type="ECO:0000250" key="1">
    <source>
        <dbReference type="UniProtKB" id="P9WMR3"/>
    </source>
</evidence>
<evidence type="ECO:0000250" key="2">
    <source>
        <dbReference type="UniProtKB" id="Q55418"/>
    </source>
</evidence>
<evidence type="ECO:0000255" key="3">
    <source>
        <dbReference type="PROSITE-ProRule" id="PRU00273"/>
    </source>
</evidence>
<evidence type="ECO:0000255" key="4">
    <source>
        <dbReference type="PROSITE-ProRule" id="PRU00596"/>
    </source>
</evidence>
<evidence type="ECO:0000256" key="5">
    <source>
        <dbReference type="SAM" id="MobiDB-lite"/>
    </source>
</evidence>
<evidence type="ECO:0000305" key="6"/>
<keyword id="KW-0067">ATP-binding</keyword>
<keyword id="KW-0068">Autocatalytic cleavage</keyword>
<keyword id="KW-0235">DNA replication</keyword>
<keyword id="KW-0238">DNA-binding</keyword>
<keyword id="KW-0255">Endonuclease</keyword>
<keyword id="KW-0347">Helicase</keyword>
<keyword id="KW-0378">Hydrolase</keyword>
<keyword id="KW-0404">Intron homing</keyword>
<keyword id="KW-0413">Isomerase</keyword>
<keyword id="KW-0540">Nuclease</keyword>
<keyword id="KW-0547">Nucleotide-binding</keyword>
<keyword id="KW-0639">Primosome</keyword>
<keyword id="KW-0651">Protein splicing</keyword>
<keyword id="KW-1185">Reference proteome</keyword>
<keyword id="KW-0677">Repeat</keyword>
<proteinExistence type="inferred from homology"/>